<evidence type="ECO:0000255" key="1">
    <source>
        <dbReference type="HAMAP-Rule" id="MF_00262"/>
    </source>
</evidence>
<organism>
    <name type="scientific">Thermoanaerobacter sp. (strain X514)</name>
    <dbReference type="NCBI Taxonomy" id="399726"/>
    <lineage>
        <taxon>Bacteria</taxon>
        <taxon>Bacillati</taxon>
        <taxon>Bacillota</taxon>
        <taxon>Clostridia</taxon>
        <taxon>Thermoanaerobacterales</taxon>
        <taxon>Thermoanaerobacteraceae</taxon>
        <taxon>Thermoanaerobacter</taxon>
    </lineage>
</organism>
<comment type="function">
    <text evidence="1">Prevents the cell division inhibition by proteins MinC and MinD at internal division sites while permitting inhibition at polar sites. This ensures cell division at the proper site by restricting the formation of a division septum at the midpoint of the long axis of the cell.</text>
</comment>
<comment type="similarity">
    <text evidence="1">Belongs to the MinE family.</text>
</comment>
<feature type="chain" id="PRO_1000114250" description="Cell division topological specificity factor">
    <location>
        <begin position="1"/>
        <end position="91"/>
    </location>
</feature>
<name>MINE_THEPX</name>
<proteinExistence type="inferred from homology"/>
<keyword id="KW-0131">Cell cycle</keyword>
<keyword id="KW-0132">Cell division</keyword>
<reference key="1">
    <citation type="submission" date="2008-01" db="EMBL/GenBank/DDBJ databases">
        <title>Complete sequence of Thermoanaerobacter sp. X514.</title>
        <authorList>
            <consortium name="US DOE Joint Genome Institute"/>
            <person name="Copeland A."/>
            <person name="Lucas S."/>
            <person name="Lapidus A."/>
            <person name="Barry K."/>
            <person name="Glavina del Rio T."/>
            <person name="Dalin E."/>
            <person name="Tice H."/>
            <person name="Pitluck S."/>
            <person name="Bruce D."/>
            <person name="Goodwin L."/>
            <person name="Saunders E."/>
            <person name="Brettin T."/>
            <person name="Detter J.C."/>
            <person name="Han C."/>
            <person name="Schmutz J."/>
            <person name="Larimer F."/>
            <person name="Land M."/>
            <person name="Hauser L."/>
            <person name="Kyrpides N."/>
            <person name="Kim E."/>
            <person name="Hemme C."/>
            <person name="Fields M.W."/>
            <person name="He Z."/>
            <person name="Zhou J."/>
            <person name="Richardson P."/>
        </authorList>
    </citation>
    <scope>NUCLEOTIDE SEQUENCE [LARGE SCALE GENOMIC DNA]</scope>
    <source>
        <strain>X514</strain>
    </source>
</reference>
<sequence length="91" mass="10438">MDLFKSFGGKNNSKNIAKERLQLLLVHDRADVSPKFLEMIKEDILNVISNYVDIDEAGLNVEITKEKRSDNTYIPALHANIPIKKMKQVIR</sequence>
<dbReference type="EMBL" id="CP000923">
    <property type="protein sequence ID" value="ABY93400.1"/>
    <property type="molecule type" value="Genomic_DNA"/>
</dbReference>
<dbReference type="RefSeq" id="WP_003866921.1">
    <property type="nucleotide sequence ID" value="NC_010320.1"/>
</dbReference>
<dbReference type="SMR" id="B0K429"/>
<dbReference type="KEGG" id="tex:Teth514_2128"/>
<dbReference type="HOGENOM" id="CLU_137929_1_1_9"/>
<dbReference type="Proteomes" id="UP000002155">
    <property type="component" value="Chromosome"/>
</dbReference>
<dbReference type="GO" id="GO:0051301">
    <property type="term" value="P:cell division"/>
    <property type="evidence" value="ECO:0007669"/>
    <property type="project" value="UniProtKB-KW"/>
</dbReference>
<dbReference type="GO" id="GO:0032955">
    <property type="term" value="P:regulation of division septum assembly"/>
    <property type="evidence" value="ECO:0007669"/>
    <property type="project" value="InterPro"/>
</dbReference>
<dbReference type="Gene3D" id="3.30.1070.10">
    <property type="entry name" value="Cell division topological specificity factor MinE"/>
    <property type="match status" value="1"/>
</dbReference>
<dbReference type="HAMAP" id="MF_00262">
    <property type="entry name" value="MinE"/>
    <property type="match status" value="1"/>
</dbReference>
<dbReference type="InterPro" id="IPR005527">
    <property type="entry name" value="MinE"/>
</dbReference>
<dbReference type="InterPro" id="IPR036707">
    <property type="entry name" value="MinE_sf"/>
</dbReference>
<dbReference type="NCBIfam" id="TIGR01215">
    <property type="entry name" value="minE"/>
    <property type="match status" value="1"/>
</dbReference>
<dbReference type="NCBIfam" id="NF001422">
    <property type="entry name" value="PRK00296.1"/>
    <property type="match status" value="1"/>
</dbReference>
<dbReference type="Pfam" id="PF03776">
    <property type="entry name" value="MinE"/>
    <property type="match status" value="1"/>
</dbReference>
<dbReference type="SUPFAM" id="SSF55229">
    <property type="entry name" value="Cell division protein MinE topological specificity domain"/>
    <property type="match status" value="1"/>
</dbReference>
<gene>
    <name evidence="1" type="primary">minE</name>
    <name type="ordered locus">Teth514_2128</name>
</gene>
<protein>
    <recommendedName>
        <fullName evidence="1">Cell division topological specificity factor</fullName>
    </recommendedName>
</protein>
<accession>B0K429</accession>